<evidence type="ECO:0000255" key="1">
    <source>
        <dbReference type="HAMAP-Rule" id="MF_00539"/>
    </source>
</evidence>
<evidence type="ECO:0000256" key="2">
    <source>
        <dbReference type="SAM" id="MobiDB-lite"/>
    </source>
</evidence>
<evidence type="ECO:0000305" key="3"/>
<comment type="similarity">
    <text evidence="1">Belongs to the bacterial ribosomal protein bL27 family.</text>
</comment>
<dbReference type="EMBL" id="CP000393">
    <property type="protein sequence ID" value="ABG52357.1"/>
    <property type="molecule type" value="Genomic_DNA"/>
</dbReference>
<dbReference type="RefSeq" id="WP_011612702.1">
    <property type="nucleotide sequence ID" value="NC_008312.1"/>
</dbReference>
<dbReference type="SMR" id="Q10ZG7"/>
<dbReference type="STRING" id="203124.Tery_3242"/>
<dbReference type="KEGG" id="ter:Tery_3242"/>
<dbReference type="eggNOG" id="COG0211">
    <property type="taxonomic scope" value="Bacteria"/>
</dbReference>
<dbReference type="HOGENOM" id="CLU_095424_4_0_3"/>
<dbReference type="OrthoDB" id="9803474at2"/>
<dbReference type="GO" id="GO:0022625">
    <property type="term" value="C:cytosolic large ribosomal subunit"/>
    <property type="evidence" value="ECO:0007669"/>
    <property type="project" value="TreeGrafter"/>
</dbReference>
<dbReference type="GO" id="GO:0003735">
    <property type="term" value="F:structural constituent of ribosome"/>
    <property type="evidence" value="ECO:0007669"/>
    <property type="project" value="InterPro"/>
</dbReference>
<dbReference type="GO" id="GO:0006412">
    <property type="term" value="P:translation"/>
    <property type="evidence" value="ECO:0007669"/>
    <property type="project" value="UniProtKB-UniRule"/>
</dbReference>
<dbReference type="FunFam" id="2.40.50.100:FF:000004">
    <property type="entry name" value="50S ribosomal protein L27"/>
    <property type="match status" value="1"/>
</dbReference>
<dbReference type="Gene3D" id="2.40.50.100">
    <property type="match status" value="1"/>
</dbReference>
<dbReference type="HAMAP" id="MF_00539">
    <property type="entry name" value="Ribosomal_bL27"/>
    <property type="match status" value="1"/>
</dbReference>
<dbReference type="InterPro" id="IPR001684">
    <property type="entry name" value="Ribosomal_bL27"/>
</dbReference>
<dbReference type="InterPro" id="IPR018261">
    <property type="entry name" value="Ribosomal_bL27_CS"/>
</dbReference>
<dbReference type="NCBIfam" id="TIGR00062">
    <property type="entry name" value="L27"/>
    <property type="match status" value="1"/>
</dbReference>
<dbReference type="PANTHER" id="PTHR15893:SF0">
    <property type="entry name" value="LARGE RIBOSOMAL SUBUNIT PROTEIN BL27M"/>
    <property type="match status" value="1"/>
</dbReference>
<dbReference type="PANTHER" id="PTHR15893">
    <property type="entry name" value="RIBOSOMAL PROTEIN L27"/>
    <property type="match status" value="1"/>
</dbReference>
<dbReference type="Pfam" id="PF01016">
    <property type="entry name" value="Ribosomal_L27"/>
    <property type="match status" value="1"/>
</dbReference>
<dbReference type="PRINTS" id="PR00063">
    <property type="entry name" value="RIBOSOMALL27"/>
</dbReference>
<dbReference type="SUPFAM" id="SSF110324">
    <property type="entry name" value="Ribosomal L27 protein-like"/>
    <property type="match status" value="1"/>
</dbReference>
<dbReference type="PROSITE" id="PS00831">
    <property type="entry name" value="RIBOSOMAL_L27"/>
    <property type="match status" value="1"/>
</dbReference>
<accession>Q10ZG7</accession>
<keyword id="KW-0687">Ribonucleoprotein</keyword>
<keyword id="KW-0689">Ribosomal protein</keyword>
<feature type="chain" id="PRO_1000017642" description="Large ribosomal subunit protein bL27">
    <location>
        <begin position="1"/>
        <end position="95"/>
    </location>
</feature>
<feature type="region of interest" description="Disordered" evidence="2">
    <location>
        <begin position="1"/>
        <end position="24"/>
    </location>
</feature>
<feature type="compositionally biased region" description="Polar residues" evidence="2">
    <location>
        <begin position="7"/>
        <end position="20"/>
    </location>
</feature>
<reference key="1">
    <citation type="journal article" date="2015" name="Proc. Natl. Acad. Sci. U.S.A.">
        <title>Trichodesmium genome maintains abundant, widespread noncoding DNA in situ, despite oligotrophic lifestyle.</title>
        <authorList>
            <person name="Walworth N."/>
            <person name="Pfreundt U."/>
            <person name="Nelson W.C."/>
            <person name="Mincer T."/>
            <person name="Heidelberg J.F."/>
            <person name="Fu F."/>
            <person name="Waterbury J.B."/>
            <person name="Glavina del Rio T."/>
            <person name="Goodwin L."/>
            <person name="Kyrpides N.C."/>
            <person name="Land M.L."/>
            <person name="Woyke T."/>
            <person name="Hutchins D.A."/>
            <person name="Hess W.R."/>
            <person name="Webb E.A."/>
        </authorList>
    </citation>
    <scope>NUCLEOTIDE SEQUENCE [LARGE SCALE GENOMIC DNA]</scope>
    <source>
        <strain>IMS101</strain>
    </source>
</reference>
<organism>
    <name type="scientific">Trichodesmium erythraeum (strain IMS101)</name>
    <dbReference type="NCBI Taxonomy" id="203124"/>
    <lineage>
        <taxon>Bacteria</taxon>
        <taxon>Bacillati</taxon>
        <taxon>Cyanobacteriota</taxon>
        <taxon>Cyanophyceae</taxon>
        <taxon>Oscillatoriophycideae</taxon>
        <taxon>Oscillatoriales</taxon>
        <taxon>Microcoleaceae</taxon>
        <taxon>Trichodesmium</taxon>
    </lineage>
</organism>
<protein>
    <recommendedName>
        <fullName evidence="1">Large ribosomal subunit protein bL27</fullName>
    </recommendedName>
    <alternativeName>
        <fullName evidence="3">50S ribosomal protein L27</fullName>
    </alternativeName>
</protein>
<name>RL27_TRIEI</name>
<proteinExistence type="inferred from homology"/>
<gene>
    <name evidence="1" type="primary">rpmA</name>
    <name evidence="1" type="synonym">rpl27</name>
    <name type="ordered locus">Tery_3242</name>
</gene>
<sequence length="95" mass="10278">MAHKKGTGSTRNGRDSNSQRLGVKRYGGQVVKAGNILVRQRGSKFHAGNNVGVGKDYTLFALVEGMVTFERKGKSRKKVSVYPLAQEANVAVDQA</sequence>